<accession>Q9ZDS8</accession>
<gene>
    <name evidence="1" type="primary">murC</name>
    <name type="ordered locus">RP247</name>
</gene>
<sequence length="495" mass="54613">MLLLELKKTNQTLGTIHFIGIGGVGMSGIAEILHNLGYKVQGSDLVENYNTKRLESYGIKIFLGQAKQNIKNVSYVVISSAINQNNPEIKEALERKIPIIRRAEMLAELMRLKCSVAVSGSHGKTTTTSLIACLFEAAGLCPTVINGGIINNKSTNAYLGSSNYLIAEADESDATFIHIPSTIAIITNIDPEHLDYYQDFEILIGAFRSFITNLPFYGFAVCCIDHKIVRKLVDDITERKIITYGIDSEDAHIIAFNINTDIASSTFDVKISLPNVLGTTIIEKITIPTPGRHNILNSLAAIAVGIELDFGIKAIKNGFNNFKGVKRRFTKVAEYNKAVIIDDYAHHPEEIKATLATAKNIANQQNGKVIAIFQPHRYSRIKYLFDDFMLCFADADILYITNIYAAGETPIEGITGQSLVDKMTQNKHHDKANFLAELDDVVSIIIDNAASGDMIIMMGAGNISSFANELDRRLLSHEILENTDCDTKSNDKVMQ</sequence>
<proteinExistence type="inferred from homology"/>
<name>MURC_RICPR</name>
<comment type="function">
    <text evidence="1">Cell wall formation.</text>
</comment>
<comment type="catalytic activity">
    <reaction evidence="1">
        <text>UDP-N-acetyl-alpha-D-muramate + L-alanine + ATP = UDP-N-acetyl-alpha-D-muramoyl-L-alanine + ADP + phosphate + H(+)</text>
        <dbReference type="Rhea" id="RHEA:23372"/>
        <dbReference type="ChEBI" id="CHEBI:15378"/>
        <dbReference type="ChEBI" id="CHEBI:30616"/>
        <dbReference type="ChEBI" id="CHEBI:43474"/>
        <dbReference type="ChEBI" id="CHEBI:57972"/>
        <dbReference type="ChEBI" id="CHEBI:70757"/>
        <dbReference type="ChEBI" id="CHEBI:83898"/>
        <dbReference type="ChEBI" id="CHEBI:456216"/>
        <dbReference type="EC" id="6.3.2.8"/>
    </reaction>
</comment>
<comment type="pathway">
    <text evidence="1">Cell wall biogenesis; peptidoglycan biosynthesis.</text>
</comment>
<comment type="subcellular location">
    <subcellularLocation>
        <location evidence="1">Cytoplasm</location>
    </subcellularLocation>
</comment>
<comment type="similarity">
    <text evidence="1">Belongs to the MurCDEF family.</text>
</comment>
<reference key="1">
    <citation type="journal article" date="1998" name="Nature">
        <title>The genome sequence of Rickettsia prowazekii and the origin of mitochondria.</title>
        <authorList>
            <person name="Andersson S.G.E."/>
            <person name="Zomorodipour A."/>
            <person name="Andersson J.O."/>
            <person name="Sicheritz-Ponten T."/>
            <person name="Alsmark U.C.M."/>
            <person name="Podowski R.M."/>
            <person name="Naeslund A.K."/>
            <person name="Eriksson A.-S."/>
            <person name="Winkler H.H."/>
            <person name="Kurland C.G."/>
        </authorList>
    </citation>
    <scope>NUCLEOTIDE SEQUENCE [LARGE SCALE GENOMIC DNA]</scope>
    <source>
        <strain>Madrid E</strain>
    </source>
</reference>
<evidence type="ECO:0000255" key="1">
    <source>
        <dbReference type="HAMAP-Rule" id="MF_00046"/>
    </source>
</evidence>
<protein>
    <recommendedName>
        <fullName evidence="1">UDP-N-acetylmuramate--L-alanine ligase</fullName>
        <ecNumber evidence="1">6.3.2.8</ecNumber>
    </recommendedName>
    <alternativeName>
        <fullName evidence="1">UDP-N-acetylmuramoyl-L-alanine synthetase</fullName>
    </alternativeName>
</protein>
<keyword id="KW-0067">ATP-binding</keyword>
<keyword id="KW-0131">Cell cycle</keyword>
<keyword id="KW-0132">Cell division</keyword>
<keyword id="KW-0133">Cell shape</keyword>
<keyword id="KW-0961">Cell wall biogenesis/degradation</keyword>
<keyword id="KW-0963">Cytoplasm</keyword>
<keyword id="KW-0436">Ligase</keyword>
<keyword id="KW-0547">Nucleotide-binding</keyword>
<keyword id="KW-0573">Peptidoglycan synthesis</keyword>
<keyword id="KW-1185">Reference proteome</keyword>
<dbReference type="EC" id="6.3.2.8" evidence="1"/>
<dbReference type="EMBL" id="AJ235271">
    <property type="protein sequence ID" value="CAA14709.1"/>
    <property type="molecule type" value="Genomic_DNA"/>
</dbReference>
<dbReference type="PIR" id="C71679">
    <property type="entry name" value="C71679"/>
</dbReference>
<dbReference type="RefSeq" id="NP_220632.1">
    <property type="nucleotide sequence ID" value="NC_000963.1"/>
</dbReference>
<dbReference type="RefSeq" id="WP_004598531.1">
    <property type="nucleotide sequence ID" value="NC_000963.1"/>
</dbReference>
<dbReference type="SMR" id="Q9ZDS8"/>
<dbReference type="STRING" id="272947.gene:17555328"/>
<dbReference type="EnsemblBacteria" id="CAA14709">
    <property type="protein sequence ID" value="CAA14709"/>
    <property type="gene ID" value="CAA14709"/>
</dbReference>
<dbReference type="GeneID" id="57569375"/>
<dbReference type="KEGG" id="rpr:RP247"/>
<dbReference type="PATRIC" id="fig|272947.5.peg.254"/>
<dbReference type="eggNOG" id="COG0773">
    <property type="taxonomic scope" value="Bacteria"/>
</dbReference>
<dbReference type="HOGENOM" id="CLU_028104_2_2_5"/>
<dbReference type="OrthoDB" id="9804126at2"/>
<dbReference type="UniPathway" id="UPA00219"/>
<dbReference type="Proteomes" id="UP000002480">
    <property type="component" value="Chromosome"/>
</dbReference>
<dbReference type="GO" id="GO:0005737">
    <property type="term" value="C:cytoplasm"/>
    <property type="evidence" value="ECO:0007669"/>
    <property type="project" value="UniProtKB-SubCell"/>
</dbReference>
<dbReference type="GO" id="GO:0005524">
    <property type="term" value="F:ATP binding"/>
    <property type="evidence" value="ECO:0007669"/>
    <property type="project" value="UniProtKB-UniRule"/>
</dbReference>
<dbReference type="GO" id="GO:0008763">
    <property type="term" value="F:UDP-N-acetylmuramate-L-alanine ligase activity"/>
    <property type="evidence" value="ECO:0007669"/>
    <property type="project" value="UniProtKB-UniRule"/>
</dbReference>
<dbReference type="GO" id="GO:0051301">
    <property type="term" value="P:cell division"/>
    <property type="evidence" value="ECO:0007669"/>
    <property type="project" value="UniProtKB-KW"/>
</dbReference>
<dbReference type="GO" id="GO:0071555">
    <property type="term" value="P:cell wall organization"/>
    <property type="evidence" value="ECO:0007669"/>
    <property type="project" value="UniProtKB-KW"/>
</dbReference>
<dbReference type="GO" id="GO:0009252">
    <property type="term" value="P:peptidoglycan biosynthetic process"/>
    <property type="evidence" value="ECO:0007669"/>
    <property type="project" value="UniProtKB-UniRule"/>
</dbReference>
<dbReference type="GO" id="GO:0008360">
    <property type="term" value="P:regulation of cell shape"/>
    <property type="evidence" value="ECO:0007669"/>
    <property type="project" value="UniProtKB-KW"/>
</dbReference>
<dbReference type="Gene3D" id="3.90.190.20">
    <property type="entry name" value="Mur ligase, C-terminal domain"/>
    <property type="match status" value="1"/>
</dbReference>
<dbReference type="Gene3D" id="3.40.1190.10">
    <property type="entry name" value="Mur-like, catalytic domain"/>
    <property type="match status" value="1"/>
</dbReference>
<dbReference type="Gene3D" id="3.40.50.720">
    <property type="entry name" value="NAD(P)-binding Rossmann-like Domain"/>
    <property type="match status" value="1"/>
</dbReference>
<dbReference type="HAMAP" id="MF_00046">
    <property type="entry name" value="MurC"/>
    <property type="match status" value="1"/>
</dbReference>
<dbReference type="InterPro" id="IPR036565">
    <property type="entry name" value="Mur-like_cat_sf"/>
</dbReference>
<dbReference type="InterPro" id="IPR004101">
    <property type="entry name" value="Mur_ligase_C"/>
</dbReference>
<dbReference type="InterPro" id="IPR036615">
    <property type="entry name" value="Mur_ligase_C_dom_sf"/>
</dbReference>
<dbReference type="InterPro" id="IPR013221">
    <property type="entry name" value="Mur_ligase_cen"/>
</dbReference>
<dbReference type="InterPro" id="IPR000713">
    <property type="entry name" value="Mur_ligase_N"/>
</dbReference>
<dbReference type="InterPro" id="IPR050061">
    <property type="entry name" value="MurCDEF_pg_biosynth"/>
</dbReference>
<dbReference type="InterPro" id="IPR005758">
    <property type="entry name" value="UDP-N-AcMur_Ala_ligase_MurC"/>
</dbReference>
<dbReference type="NCBIfam" id="TIGR01082">
    <property type="entry name" value="murC"/>
    <property type="match status" value="1"/>
</dbReference>
<dbReference type="PANTHER" id="PTHR43445:SF3">
    <property type="entry name" value="UDP-N-ACETYLMURAMATE--L-ALANINE LIGASE"/>
    <property type="match status" value="1"/>
</dbReference>
<dbReference type="PANTHER" id="PTHR43445">
    <property type="entry name" value="UDP-N-ACETYLMURAMATE--L-ALANINE LIGASE-RELATED"/>
    <property type="match status" value="1"/>
</dbReference>
<dbReference type="Pfam" id="PF01225">
    <property type="entry name" value="Mur_ligase"/>
    <property type="match status" value="1"/>
</dbReference>
<dbReference type="Pfam" id="PF02875">
    <property type="entry name" value="Mur_ligase_C"/>
    <property type="match status" value="1"/>
</dbReference>
<dbReference type="Pfam" id="PF08245">
    <property type="entry name" value="Mur_ligase_M"/>
    <property type="match status" value="1"/>
</dbReference>
<dbReference type="SUPFAM" id="SSF51984">
    <property type="entry name" value="MurCD N-terminal domain"/>
    <property type="match status" value="1"/>
</dbReference>
<dbReference type="SUPFAM" id="SSF53623">
    <property type="entry name" value="MurD-like peptide ligases, catalytic domain"/>
    <property type="match status" value="1"/>
</dbReference>
<dbReference type="SUPFAM" id="SSF53244">
    <property type="entry name" value="MurD-like peptide ligases, peptide-binding domain"/>
    <property type="match status" value="1"/>
</dbReference>
<feature type="chain" id="PRO_0000182143" description="UDP-N-acetylmuramate--L-alanine ligase">
    <location>
        <begin position="1"/>
        <end position="495"/>
    </location>
</feature>
<feature type="binding site" evidence="1">
    <location>
        <begin position="120"/>
        <end position="126"/>
    </location>
    <ligand>
        <name>ATP</name>
        <dbReference type="ChEBI" id="CHEBI:30616"/>
    </ligand>
</feature>
<organism>
    <name type="scientific">Rickettsia prowazekii (strain Madrid E)</name>
    <dbReference type="NCBI Taxonomy" id="272947"/>
    <lineage>
        <taxon>Bacteria</taxon>
        <taxon>Pseudomonadati</taxon>
        <taxon>Pseudomonadota</taxon>
        <taxon>Alphaproteobacteria</taxon>
        <taxon>Rickettsiales</taxon>
        <taxon>Rickettsiaceae</taxon>
        <taxon>Rickettsieae</taxon>
        <taxon>Rickettsia</taxon>
        <taxon>typhus group</taxon>
    </lineage>
</organism>